<gene>
    <name type="primary">KAR2</name>
    <name evidence="9" type="synonym">GRP78</name>
    <name type="synonym">SSD1</name>
    <name type="ordered locus">YJL034W</name>
    <name type="ORF">J1248</name>
</gene>
<reference key="1">
    <citation type="journal article" date="1989" name="Cell">
        <title>KAR2, a karyogamy gene, is the yeast homolog of the mammalian BiP/GRP78 gene.</title>
        <authorList>
            <person name="Rose M.D."/>
            <person name="Misra L.M."/>
            <person name="Vogel J.P."/>
        </authorList>
    </citation>
    <scope>NUCLEOTIDE SEQUENCE [GENOMIC DNA]</scope>
    <scope>SUBCELLULAR LOCATION</scope>
</reference>
<reference key="2">
    <citation type="journal article" date="1990" name="Proc. Natl. Acad. Sci. U.S.A.">
        <title>An essential member of the HSP70 gene family of Saccharomyces cerevisiae is homologous to immunoglobulin heavy chain binding protein.</title>
        <authorList>
            <person name="Nicholson R.C."/>
            <person name="Williams D.B."/>
            <person name="Moran L.A."/>
        </authorList>
    </citation>
    <scope>NUCLEOTIDE SEQUENCE [GENOMIC DNA]</scope>
    <source>
        <strain>LL20</strain>
    </source>
</reference>
<reference key="3">
    <citation type="journal article" date="1989" name="Cell">
        <title>S. cerevisiae encodes an essential protein homologous in sequence and function to mammalian BiP.</title>
        <authorList>
            <person name="Normington K."/>
            <person name="Kohno K."/>
            <person name="Kozutsumi Y."/>
            <person name="Gething M.J."/>
            <person name="Sambrook J."/>
        </authorList>
    </citation>
    <scope>NUCLEOTIDE SEQUENCE [GENOMIC DNA]</scope>
</reference>
<reference key="4">
    <citation type="journal article" date="1996" name="EMBO J.">
        <title>Complete nucleotide sequence of Saccharomyces cerevisiae chromosome X.</title>
        <authorList>
            <person name="Galibert F."/>
            <person name="Alexandraki D."/>
            <person name="Baur A."/>
            <person name="Boles E."/>
            <person name="Chalwatzis N."/>
            <person name="Chuat J.-C."/>
            <person name="Coster F."/>
            <person name="Cziepluch C."/>
            <person name="de Haan M."/>
            <person name="Domdey H."/>
            <person name="Durand P."/>
            <person name="Entian K.-D."/>
            <person name="Gatius M."/>
            <person name="Goffeau A."/>
            <person name="Grivell L.A."/>
            <person name="Hennemann A."/>
            <person name="Herbert C.J."/>
            <person name="Heumann K."/>
            <person name="Hilger F."/>
            <person name="Hollenberg C.P."/>
            <person name="Huang M.-E."/>
            <person name="Jacq C."/>
            <person name="Jauniaux J.-C."/>
            <person name="Katsoulou C."/>
            <person name="Kirchrath L."/>
            <person name="Kleine K."/>
            <person name="Kordes E."/>
            <person name="Koetter P."/>
            <person name="Liebl S."/>
            <person name="Louis E.J."/>
            <person name="Manus V."/>
            <person name="Mewes H.-W."/>
            <person name="Miosga T."/>
            <person name="Obermaier B."/>
            <person name="Perea J."/>
            <person name="Pohl T.M."/>
            <person name="Portetelle D."/>
            <person name="Pujol A."/>
            <person name="Purnelle B."/>
            <person name="Ramezani Rad M."/>
            <person name="Rasmussen S.W."/>
            <person name="Rose M."/>
            <person name="Rossau R."/>
            <person name="Schaaff-Gerstenschlaeger I."/>
            <person name="Smits P.H.M."/>
            <person name="Scarcez T."/>
            <person name="Soriano N."/>
            <person name="To Van D."/>
            <person name="Tzermia M."/>
            <person name="Van Broekhoven A."/>
            <person name="Vandenbol M."/>
            <person name="Wedler H."/>
            <person name="von Wettstein D."/>
            <person name="Wambutt R."/>
            <person name="Zagulski M."/>
            <person name="Zollner A."/>
            <person name="Karpfinger-Hartl L."/>
        </authorList>
    </citation>
    <scope>NUCLEOTIDE SEQUENCE [LARGE SCALE GENOMIC DNA]</scope>
    <source>
        <strain>ATCC 204508 / S288c</strain>
    </source>
</reference>
<reference key="5">
    <citation type="journal article" date="2014" name="G3 (Bethesda)">
        <title>The reference genome sequence of Saccharomyces cerevisiae: Then and now.</title>
        <authorList>
            <person name="Engel S.R."/>
            <person name="Dietrich F.S."/>
            <person name="Fisk D.G."/>
            <person name="Binkley G."/>
            <person name="Balakrishnan R."/>
            <person name="Costanzo M.C."/>
            <person name="Dwight S.S."/>
            <person name="Hitz B.C."/>
            <person name="Karra K."/>
            <person name="Nash R.S."/>
            <person name="Weng S."/>
            <person name="Wong E.D."/>
            <person name="Lloyd P."/>
            <person name="Skrzypek M.S."/>
            <person name="Miyasato S.R."/>
            <person name="Simison M."/>
            <person name="Cherry J.M."/>
        </authorList>
    </citation>
    <scope>GENOME REANNOTATION</scope>
    <source>
        <strain>ATCC 204508 / S288c</strain>
    </source>
</reference>
<reference key="6">
    <citation type="journal article" date="2003" name="Mol. Cell">
        <title>Assigning function to yeast proteins by integration of technologies.</title>
        <authorList>
            <person name="Hazbun T.R."/>
            <person name="Malmstroem L."/>
            <person name="Anderson S."/>
            <person name="Graczyk B.J."/>
            <person name="Fox B."/>
            <person name="Riffle M."/>
            <person name="Sundin B.A."/>
            <person name="Aranda J.D."/>
            <person name="McDonald W.H."/>
            <person name="Chiu C.-H."/>
            <person name="Snydsman B.E."/>
            <person name="Bradley P."/>
            <person name="Muller E.G.D."/>
            <person name="Fields S."/>
            <person name="Baker D."/>
            <person name="Yates J.R. III"/>
            <person name="Davis T.N."/>
        </authorList>
    </citation>
    <scope>IDENTIFICATION BY MASS SPECTROMETRY</scope>
</reference>
<reference key="7">
    <citation type="journal article" date="2003" name="Nature">
        <title>Global analysis of protein expression in yeast.</title>
        <authorList>
            <person name="Ghaemmaghami S."/>
            <person name="Huh W.-K."/>
            <person name="Bower K."/>
            <person name="Howson R.W."/>
            <person name="Belle A."/>
            <person name="Dephoure N."/>
            <person name="O'Shea E.K."/>
            <person name="Weissman J.S."/>
        </authorList>
    </citation>
    <scope>LEVEL OF PROTEIN EXPRESSION [LARGE SCALE ANALYSIS]</scope>
</reference>
<reference key="8">
    <citation type="journal article" date="2005" name="J. Biol. Chem.">
        <title>Interactions among yeast protein-disulfide isomerase proteins and endoplasmic reticulum chaperone proteins influence their activities.</title>
        <authorList>
            <person name="Kimura T."/>
            <person name="Hosoda Y."/>
            <person name="Sato Y."/>
            <person name="Kitamura Y."/>
            <person name="Ikeda T."/>
            <person name="Horibe T."/>
            <person name="Kikuchi M."/>
        </authorList>
    </citation>
    <scope>FUNCTION</scope>
    <scope>INTERACTION WITH EPS1 AND PDI1</scope>
</reference>
<reference key="9">
    <citation type="journal article" date="2006" name="Cell">
        <title>A luminal surveillance complex that selects misfolded glycoproteins for ER-associated degradation.</title>
        <authorList>
            <person name="Denic V."/>
            <person name="Quan E.M."/>
            <person name="Weissman J.S."/>
        </authorList>
    </citation>
    <scope>INTERACTION WITH YOS9</scope>
</reference>
<organism>
    <name type="scientific">Saccharomyces cerevisiae (strain ATCC 204508 / S288c)</name>
    <name type="common">Baker's yeast</name>
    <dbReference type="NCBI Taxonomy" id="559292"/>
    <lineage>
        <taxon>Eukaryota</taxon>
        <taxon>Fungi</taxon>
        <taxon>Dikarya</taxon>
        <taxon>Ascomycota</taxon>
        <taxon>Saccharomycotina</taxon>
        <taxon>Saccharomycetes</taxon>
        <taxon>Saccharomycetales</taxon>
        <taxon>Saccharomycetaceae</taxon>
        <taxon>Saccharomyces</taxon>
    </lineage>
</organism>
<proteinExistence type="evidence at protein level"/>
<protein>
    <recommendedName>
        <fullName evidence="10">Endoplasmic reticulum chaperone BiP</fullName>
        <ecNumber evidence="1">3.6.4.10</ecNumber>
    </recommendedName>
    <alternativeName>
        <fullName evidence="9">78 kDa glucose-regulated protein homolog</fullName>
        <shortName evidence="9">GRP-78</shortName>
    </alternativeName>
    <alternativeName>
        <fullName evidence="10">Immunoglobulin heavy chain-binding protein homolog</fullName>
        <shortName evidence="10">BiP</shortName>
    </alternativeName>
</protein>
<accession>P16474</accession>
<accession>D6VWE9</accession>
<keyword id="KW-0002">3D-structure</keyword>
<keyword id="KW-0067">ATP-binding</keyword>
<keyword id="KW-0143">Chaperone</keyword>
<keyword id="KW-0256">Endoplasmic reticulum</keyword>
<keyword id="KW-0378">Hydrolase</keyword>
<keyword id="KW-0547">Nucleotide-binding</keyword>
<keyword id="KW-1185">Reference proteome</keyword>
<keyword id="KW-0732">Signal</keyword>
<keyword id="KW-0346">Stress response</keyword>
<feature type="signal peptide" evidence="2">
    <location>
        <begin position="1"/>
        <end position="42"/>
    </location>
</feature>
<feature type="chain" id="PRO_0000013587" description="Endoplasmic reticulum chaperone BiP">
    <location>
        <begin position="43"/>
        <end position="682"/>
    </location>
</feature>
<feature type="region of interest" description="Nucleotide-binding (NBD)" evidence="1">
    <location>
        <begin position="146"/>
        <end position="300"/>
    </location>
</feature>
<feature type="region of interest" description="Substrate-binding (SBD)" evidence="1">
    <location>
        <begin position="420"/>
        <end position="520"/>
    </location>
</feature>
<feature type="region of interest" description="Disordered" evidence="4">
    <location>
        <begin position="652"/>
        <end position="682"/>
    </location>
</feature>
<feature type="short sequence motif" description="Prevents secretion from ER" evidence="3">
    <location>
        <begin position="679"/>
        <end position="682"/>
    </location>
</feature>
<feature type="compositionally biased region" description="Acidic residues" evidence="4">
    <location>
        <begin position="664"/>
        <end position="675"/>
    </location>
</feature>
<feature type="binding site" evidence="1">
    <location>
        <begin position="58"/>
        <end position="61"/>
    </location>
    <ligand>
        <name>ATP</name>
        <dbReference type="ChEBI" id="CHEBI:30616"/>
    </ligand>
</feature>
<feature type="binding site" evidence="1">
    <location>
        <position position="117"/>
    </location>
    <ligand>
        <name>ATP</name>
        <dbReference type="ChEBI" id="CHEBI:30616"/>
    </ligand>
</feature>
<feature type="binding site" evidence="1">
    <location>
        <begin position="247"/>
        <end position="249"/>
    </location>
    <ligand>
        <name>ATP</name>
        <dbReference type="ChEBI" id="CHEBI:30616"/>
    </ligand>
</feature>
<feature type="binding site" evidence="1">
    <location>
        <begin position="313"/>
        <end position="320"/>
    </location>
    <ligand>
        <name>ATP</name>
        <dbReference type="ChEBI" id="CHEBI:30616"/>
    </ligand>
</feature>
<feature type="binding site" evidence="1">
    <location>
        <begin position="384"/>
        <end position="387"/>
    </location>
    <ligand>
        <name>ATP</name>
        <dbReference type="ChEBI" id="CHEBI:30616"/>
    </ligand>
</feature>
<feature type="strand" evidence="12">
    <location>
        <begin position="53"/>
        <end position="57"/>
    </location>
</feature>
<feature type="strand" evidence="12">
    <location>
        <begin position="59"/>
        <end position="67"/>
    </location>
</feature>
<feature type="strand" evidence="12">
    <location>
        <begin position="72"/>
        <end position="74"/>
    </location>
</feature>
<feature type="strand" evidence="12">
    <location>
        <begin position="82"/>
        <end position="85"/>
    </location>
</feature>
<feature type="strand" evidence="12">
    <location>
        <begin position="88"/>
        <end position="90"/>
    </location>
</feature>
<feature type="strand" evidence="12">
    <location>
        <begin position="95"/>
        <end position="98"/>
    </location>
</feature>
<feature type="helix" evidence="12">
    <location>
        <begin position="99"/>
        <end position="103"/>
    </location>
</feature>
<feature type="helix" evidence="12">
    <location>
        <begin position="105"/>
        <end position="107"/>
    </location>
</feature>
<feature type="helix" evidence="12">
    <location>
        <begin position="109"/>
        <end position="111"/>
    </location>
</feature>
<feature type="helix" evidence="12">
    <location>
        <begin position="116"/>
        <end position="118"/>
    </location>
</feature>
<feature type="turn" evidence="12">
    <location>
        <begin position="119"/>
        <end position="121"/>
    </location>
</feature>
<feature type="helix" evidence="12">
    <location>
        <begin position="127"/>
        <end position="133"/>
    </location>
</feature>
<feature type="strand" evidence="12">
    <location>
        <begin position="137"/>
        <end position="143"/>
    </location>
</feature>
<feature type="strand" evidence="12">
    <location>
        <begin position="146"/>
        <end position="160"/>
    </location>
</feature>
<feature type="helix" evidence="12">
    <location>
        <begin position="162"/>
        <end position="181"/>
    </location>
</feature>
<feature type="strand" evidence="12">
    <location>
        <begin position="187"/>
        <end position="192"/>
    </location>
</feature>
<feature type="helix" evidence="12">
    <location>
        <begin position="198"/>
        <end position="210"/>
    </location>
</feature>
<feature type="strand" evidence="12">
    <location>
        <begin position="214"/>
        <end position="220"/>
    </location>
</feature>
<feature type="helix" evidence="12">
    <location>
        <begin position="221"/>
        <end position="228"/>
    </location>
</feature>
<feature type="turn" evidence="12">
    <location>
        <begin position="229"/>
        <end position="232"/>
    </location>
</feature>
<feature type="strand" evidence="12">
    <location>
        <begin position="238"/>
        <end position="245"/>
    </location>
</feature>
<feature type="strand" evidence="12">
    <location>
        <begin position="250"/>
        <end position="258"/>
    </location>
</feature>
<feature type="strand" evidence="12">
    <location>
        <begin position="261"/>
        <end position="270"/>
    </location>
</feature>
<feature type="helix" evidence="12">
    <location>
        <begin position="275"/>
        <end position="294"/>
    </location>
</feature>
<feature type="helix" evidence="13">
    <location>
        <begin position="298"/>
        <end position="300"/>
    </location>
</feature>
<feature type="helix" evidence="12">
    <location>
        <begin position="302"/>
        <end position="318"/>
    </location>
</feature>
<feature type="turn" evidence="12">
    <location>
        <begin position="319"/>
        <end position="321"/>
    </location>
</feature>
<feature type="strand" evidence="12">
    <location>
        <begin position="323"/>
        <end position="333"/>
    </location>
</feature>
<feature type="strand" evidence="12">
    <location>
        <begin position="336"/>
        <end position="343"/>
    </location>
</feature>
<feature type="helix" evidence="12">
    <location>
        <begin position="344"/>
        <end position="357"/>
    </location>
</feature>
<feature type="helix" evidence="12">
    <location>
        <begin position="359"/>
        <end position="369"/>
    </location>
</feature>
<feature type="helix" evidence="12">
    <location>
        <begin position="373"/>
        <end position="375"/>
    </location>
</feature>
<feature type="strand" evidence="12">
    <location>
        <begin position="378"/>
        <end position="383"/>
    </location>
</feature>
<feature type="helix" evidence="12">
    <location>
        <begin position="384"/>
        <end position="387"/>
    </location>
</feature>
<feature type="helix" evidence="12">
    <location>
        <begin position="389"/>
        <end position="398"/>
    </location>
</feature>
<feature type="turn" evidence="12">
    <location>
        <begin position="399"/>
        <end position="401"/>
    </location>
</feature>
<feature type="turn" evidence="12">
    <location>
        <begin position="410"/>
        <end position="412"/>
    </location>
</feature>
<feature type="helix" evidence="12">
    <location>
        <begin position="413"/>
        <end position="425"/>
    </location>
</feature>
<feature type="strand" evidence="11">
    <location>
        <begin position="444"/>
        <end position="448"/>
    </location>
</feature>
<feature type="turn" evidence="11">
    <location>
        <begin position="449"/>
        <end position="451"/>
    </location>
</feature>
<feature type="strand" evidence="11">
    <location>
        <begin position="452"/>
        <end position="457"/>
    </location>
</feature>
<feature type="strand" evidence="11">
    <location>
        <begin position="462"/>
        <end position="471"/>
    </location>
</feature>
<feature type="strand" evidence="11">
    <location>
        <begin position="481"/>
        <end position="489"/>
    </location>
</feature>
<feature type="helix" evidence="11">
    <location>
        <begin position="493"/>
        <end position="495"/>
    </location>
</feature>
<feature type="strand" evidence="11">
    <location>
        <begin position="496"/>
        <end position="504"/>
    </location>
</feature>
<feature type="strand" evidence="11">
    <location>
        <begin position="517"/>
        <end position="523"/>
    </location>
</feature>
<feature type="strand" evidence="11">
    <location>
        <begin position="527"/>
        <end position="535"/>
    </location>
</feature>
<feature type="turn" evidence="11">
    <location>
        <begin position="536"/>
        <end position="538"/>
    </location>
</feature>
<feature type="strand" evidence="11">
    <location>
        <begin position="541"/>
        <end position="547"/>
    </location>
</feature>
<feature type="helix" evidence="11">
    <location>
        <begin position="555"/>
        <end position="567"/>
    </location>
</feature>
<feature type="helix" evidence="11">
    <location>
        <begin position="569"/>
        <end position="580"/>
    </location>
</feature>
<sequence>MFFNRLSAGKLLVPLSVVLYALFVVILPLQNSFHSSNVLVRGADDVENYGTVIGIDLGTTYSCVAVMKNGKTEILANEQGNRITPSYVAFTDDERLIGDAAKNQVAANPQNTIFDIKRLIGLKYNDRSVQKDIKHLPFNVVNKDGKPAVEVSVKGEKKVFTPEEISGMILGKMKQIAEDYLGTKVTHAVVTVPAYFNDAQRQATKDAGTIAGLNVLRIVNEPTAAAIAYGLDKSDKEHQIIVYDLGGGTFDVSLLSIENGVFEVQATSGDTHLGGEDFDYKIVRQLIKAFKKKHGIDVSDNNKALAKLKREAEKAKRALSSQMSTRIEIDSFVDGIDLSETLTRAKFEELNLDLFKKTLKPVEKVLQDSGLEKKDVDDIVLVGGSTRIPKVQQLLESYFDGKKASKGINPDEAVAYGAAVQAGVLSGEEGVEDIVLLDVNALTLGIETTGGVMTPLIKRNTAIPTKKSQIFSTAVDNQPTVMIKVYEGERAMSKDNNLLGKFELTGIPPAPRGVPQIEVTFALDANGILKVSATDKGTGKSESITITNDKGRLTQEEIDRMVEEAEKFASEDASIKAKVESRNKLENYAHSLKNQVNGDLGEKLEEEDKETLLDAANDVLEWLDDNFETAIAEDFDEKFESLSKVAYPITSKLYGGADGSGAADYDDEDEDDDGDYFEHDEL</sequence>
<comment type="function">
    <text evidence="6">Probably plays a role in facilitating the assembly of multimeric protein complexes inside the ER. Is required for secretory polypeptide translocation. May physically associate with SEC63 protein in the endoplasmic reticulum and this interaction may be regulated by ATP hydrolysis.</text>
</comment>
<comment type="catalytic activity">
    <reaction evidence="1">
        <text>ATP + H2O = ADP + phosphate + H(+)</text>
        <dbReference type="Rhea" id="RHEA:13065"/>
        <dbReference type="ChEBI" id="CHEBI:15377"/>
        <dbReference type="ChEBI" id="CHEBI:15378"/>
        <dbReference type="ChEBI" id="CHEBI:30616"/>
        <dbReference type="ChEBI" id="CHEBI:43474"/>
        <dbReference type="ChEBI" id="CHEBI:456216"/>
        <dbReference type="EC" id="3.6.4.10"/>
    </reaction>
</comment>
<comment type="activity regulation">
    <text evidence="1">The chaperone activity is regulated by ATP-induced allosteric coupling of the nucleotide-binding (NBD) and substrate-binding (SBD) domains. In the ADP-bound and nucleotide-free (apo) states, the two domains have little interaction. In contrast, in the ATP-bound state the two domains are tightly coupled, which results in drastically accelerated kinetics in both binding and release of polypeptide substrates. J domain-containing co-chaperones stimulate the ATPase activity and are required for efficient substrate recognition.</text>
</comment>
<comment type="subunit">
    <text evidence="6 7">Interacts with EPS1, PDI1 and YOS9.</text>
</comment>
<comment type="interaction">
    <interactant intactId="EBI-7876">
        <id>P16474</id>
    </interactant>
    <interactant intactId="EBI-8898">
        <id>P21954</id>
        <label>IDP1</label>
    </interactant>
    <organismsDiffer>false</organismsDiffer>
    <experiments>2</experiments>
</comment>
<comment type="interaction">
    <interactant intactId="EBI-7876">
        <id>P16474</id>
    </interactant>
    <interactant intactId="EBI-34938">
        <id>Q99220</id>
        <label>YOS9</label>
    </interactant>
    <organismsDiffer>false</organismsDiffer>
    <experiments>2</experiments>
</comment>
<comment type="subcellular location">
    <subcellularLocation>
        <location evidence="3 8">Endoplasmic reticulum lumen</location>
    </subcellularLocation>
</comment>
<comment type="miscellaneous">
    <text evidence="5">Present with 337000 molecules/cell in log phase SD medium.</text>
</comment>
<comment type="similarity">
    <text evidence="10">Belongs to the heat shock protein 70 family.</text>
</comment>
<dbReference type="EC" id="3.6.4.10" evidence="1"/>
<dbReference type="EMBL" id="M25064">
    <property type="protein sequence ID" value="AAA34714.1"/>
    <property type="molecule type" value="Genomic_DNA"/>
</dbReference>
<dbReference type="EMBL" id="M25394">
    <property type="protein sequence ID" value="AAA34713.1"/>
    <property type="molecule type" value="Genomic_DNA"/>
</dbReference>
<dbReference type="EMBL" id="M31006">
    <property type="protein sequence ID" value="AAA34454.1"/>
    <property type="molecule type" value="Genomic_DNA"/>
</dbReference>
<dbReference type="EMBL" id="Z49309">
    <property type="protein sequence ID" value="CAA89325.1"/>
    <property type="molecule type" value="Genomic_DNA"/>
</dbReference>
<dbReference type="EMBL" id="BK006943">
    <property type="protein sequence ID" value="DAA08765.1"/>
    <property type="molecule type" value="Genomic_DNA"/>
</dbReference>
<dbReference type="PIR" id="A32366">
    <property type="entry name" value="HHBYK2"/>
</dbReference>
<dbReference type="RefSeq" id="NP_012500.3">
    <property type="nucleotide sequence ID" value="NM_001181468.3"/>
</dbReference>
<dbReference type="PDB" id="3H0X">
    <property type="method" value="X-ray"/>
    <property type="resolution" value="1.92 A"/>
    <property type="chains" value="A=438-586"/>
</dbReference>
<dbReference type="PDB" id="3QFP">
    <property type="method" value="X-ray"/>
    <property type="resolution" value="2.26 A"/>
    <property type="chains" value="A=43-426"/>
</dbReference>
<dbReference type="PDB" id="3QFU">
    <property type="method" value="X-ray"/>
    <property type="resolution" value="1.80 A"/>
    <property type="chains" value="A=43-426"/>
</dbReference>
<dbReference type="PDB" id="3QML">
    <property type="method" value="X-ray"/>
    <property type="resolution" value="2.31 A"/>
    <property type="chains" value="A/B=43-426"/>
</dbReference>
<dbReference type="PDBsum" id="3H0X"/>
<dbReference type="PDBsum" id="3QFP"/>
<dbReference type="PDBsum" id="3QFU"/>
<dbReference type="PDBsum" id="3QML"/>
<dbReference type="SMR" id="P16474"/>
<dbReference type="BioGRID" id="33726">
    <property type="interactions" value="692"/>
</dbReference>
<dbReference type="ComplexPortal" id="CPX-1280">
    <property type="entry name" value="Luminal surveillance complex"/>
</dbReference>
<dbReference type="DIP" id="DIP-2392N"/>
<dbReference type="FunCoup" id="P16474">
    <property type="interactions" value="1746"/>
</dbReference>
<dbReference type="IntAct" id="P16474">
    <property type="interactions" value="173"/>
</dbReference>
<dbReference type="MINT" id="P16474"/>
<dbReference type="STRING" id="4932.YJL034W"/>
<dbReference type="iPTMnet" id="P16474"/>
<dbReference type="PaxDb" id="4932-YJL034W"/>
<dbReference type="PeptideAtlas" id="P16474"/>
<dbReference type="EnsemblFungi" id="YJL034W_mRNA">
    <property type="protein sequence ID" value="YJL034W"/>
    <property type="gene ID" value="YJL034W"/>
</dbReference>
<dbReference type="GeneID" id="853418"/>
<dbReference type="KEGG" id="sce:YJL034W"/>
<dbReference type="AGR" id="SGD:S000003571"/>
<dbReference type="SGD" id="S000003571">
    <property type="gene designation" value="KAR2"/>
</dbReference>
<dbReference type="VEuPathDB" id="FungiDB:YJL034W"/>
<dbReference type="eggNOG" id="KOG0100">
    <property type="taxonomic scope" value="Eukaryota"/>
</dbReference>
<dbReference type="GeneTree" id="ENSGT00940000176233"/>
<dbReference type="HOGENOM" id="CLU_005965_7_0_1"/>
<dbReference type="InParanoid" id="P16474"/>
<dbReference type="OMA" id="VQRDIKH"/>
<dbReference type="OrthoDB" id="2401965at2759"/>
<dbReference type="BioCyc" id="YEAST:G3O-31501-MONOMER"/>
<dbReference type="Reactome" id="R-SCE-3371453">
    <property type="pathway name" value="Regulation of HSF1-mediated heat shock response"/>
</dbReference>
<dbReference type="BioGRID-ORCS" id="853418">
    <property type="hits" value="6 hits in 10 CRISPR screens"/>
</dbReference>
<dbReference type="EvolutionaryTrace" id="P16474"/>
<dbReference type="PRO" id="PR:P16474"/>
<dbReference type="Proteomes" id="UP000002311">
    <property type="component" value="Chromosome X"/>
</dbReference>
<dbReference type="RNAct" id="P16474">
    <property type="molecule type" value="protein"/>
</dbReference>
<dbReference type="GO" id="GO:0005737">
    <property type="term" value="C:cytoplasm"/>
    <property type="evidence" value="ECO:0000318"/>
    <property type="project" value="GO_Central"/>
</dbReference>
<dbReference type="GO" id="GO:0005783">
    <property type="term" value="C:endoplasmic reticulum"/>
    <property type="evidence" value="ECO:0000314"/>
    <property type="project" value="SGD"/>
</dbReference>
<dbReference type="GO" id="GO:0034663">
    <property type="term" value="C:endoplasmic reticulum chaperone complex"/>
    <property type="evidence" value="ECO:0000318"/>
    <property type="project" value="GO_Central"/>
</dbReference>
<dbReference type="GO" id="GO:0005788">
    <property type="term" value="C:endoplasmic reticulum lumen"/>
    <property type="evidence" value="ECO:0000318"/>
    <property type="project" value="GO_Central"/>
</dbReference>
<dbReference type="GO" id="GO:0005789">
    <property type="term" value="C:endoplasmic reticulum membrane"/>
    <property type="evidence" value="ECO:0000303"/>
    <property type="project" value="ComplexPortal"/>
</dbReference>
<dbReference type="GO" id="GO:0034099">
    <property type="term" value="C:luminal surveillance complex"/>
    <property type="evidence" value="ECO:0000314"/>
    <property type="project" value="SGD"/>
</dbReference>
<dbReference type="GO" id="GO:0016020">
    <property type="term" value="C:membrane"/>
    <property type="evidence" value="ECO:0000318"/>
    <property type="project" value="GO_Central"/>
</dbReference>
<dbReference type="GO" id="GO:0005634">
    <property type="term" value="C:nucleus"/>
    <property type="evidence" value="ECO:0000318"/>
    <property type="project" value="GO_Central"/>
</dbReference>
<dbReference type="GO" id="GO:0005524">
    <property type="term" value="F:ATP binding"/>
    <property type="evidence" value="ECO:0007669"/>
    <property type="project" value="UniProtKB-KW"/>
</dbReference>
<dbReference type="GO" id="GO:0016887">
    <property type="term" value="F:ATP hydrolysis activity"/>
    <property type="evidence" value="ECO:0000314"/>
    <property type="project" value="SGD"/>
</dbReference>
<dbReference type="GO" id="GO:0140662">
    <property type="term" value="F:ATP-dependent protein folding chaperone"/>
    <property type="evidence" value="ECO:0007669"/>
    <property type="project" value="InterPro"/>
</dbReference>
<dbReference type="GO" id="GO:0031072">
    <property type="term" value="F:heat shock protein binding"/>
    <property type="evidence" value="ECO:0000318"/>
    <property type="project" value="GO_Central"/>
</dbReference>
<dbReference type="GO" id="GO:0044183">
    <property type="term" value="F:protein folding chaperone"/>
    <property type="evidence" value="ECO:0000318"/>
    <property type="project" value="GO_Central"/>
</dbReference>
<dbReference type="GO" id="GO:0015450">
    <property type="term" value="F:protein-transporting ATPase activity"/>
    <property type="evidence" value="ECO:0000314"/>
    <property type="project" value="FlyBase"/>
</dbReference>
<dbReference type="GO" id="GO:0051082">
    <property type="term" value="F:unfolded protein binding"/>
    <property type="evidence" value="ECO:0000314"/>
    <property type="project" value="SGD"/>
</dbReference>
<dbReference type="GO" id="GO:0051085">
    <property type="term" value="P:chaperone cofactor-dependent protein refolding"/>
    <property type="evidence" value="ECO:0000318"/>
    <property type="project" value="GO_Central"/>
</dbReference>
<dbReference type="GO" id="GO:0002235">
    <property type="term" value="P:detection of unfolded protein"/>
    <property type="evidence" value="ECO:0000303"/>
    <property type="project" value="ComplexPortal"/>
</dbReference>
<dbReference type="GO" id="GO:0030968">
    <property type="term" value="P:endoplasmic reticulum unfolded protein response"/>
    <property type="evidence" value="ECO:0000318"/>
    <property type="project" value="GO_Central"/>
</dbReference>
<dbReference type="GO" id="GO:0036503">
    <property type="term" value="P:ERAD pathway"/>
    <property type="evidence" value="ECO:0000315"/>
    <property type="project" value="SGD"/>
</dbReference>
<dbReference type="GO" id="GO:0070880">
    <property type="term" value="P:fungal-type cell wall beta-glucan biosynthetic process"/>
    <property type="evidence" value="ECO:0000316"/>
    <property type="project" value="SGD"/>
</dbReference>
<dbReference type="GO" id="GO:0000742">
    <property type="term" value="P:karyogamy involved in conjugation with cellular fusion"/>
    <property type="evidence" value="ECO:0000315"/>
    <property type="project" value="SGD"/>
</dbReference>
<dbReference type="GO" id="GO:0031204">
    <property type="term" value="P:post-translational protein targeting to membrane, translocation"/>
    <property type="evidence" value="ECO:0000314"/>
    <property type="project" value="SGD"/>
</dbReference>
<dbReference type="GO" id="GO:0070972">
    <property type="term" value="P:protein localization to endoplasmic reticulum"/>
    <property type="evidence" value="ECO:0000315"/>
    <property type="project" value="SGD"/>
</dbReference>
<dbReference type="GO" id="GO:0042026">
    <property type="term" value="P:protein refolding"/>
    <property type="evidence" value="ECO:0000318"/>
    <property type="project" value="GO_Central"/>
</dbReference>
<dbReference type="GO" id="GO:0006986">
    <property type="term" value="P:response to unfolded protein"/>
    <property type="evidence" value="ECO:0000315"/>
    <property type="project" value="SGD"/>
</dbReference>
<dbReference type="GO" id="GO:0006616">
    <property type="term" value="P:SRP-dependent cotranslational protein targeting to membrane, translocation"/>
    <property type="evidence" value="ECO:0000315"/>
    <property type="project" value="SGD"/>
</dbReference>
<dbReference type="CDD" id="cd10241">
    <property type="entry name" value="ASKHA_NBD_HSP70_BiP"/>
    <property type="match status" value="1"/>
</dbReference>
<dbReference type="FunFam" id="1.20.1270.10:FF:000009">
    <property type="entry name" value="DnaK-type molecular chaperone BiP"/>
    <property type="match status" value="1"/>
</dbReference>
<dbReference type="FunFam" id="2.60.34.10:FF:000002">
    <property type="entry name" value="Heat shock 70 kDa"/>
    <property type="match status" value="1"/>
</dbReference>
<dbReference type="FunFam" id="3.90.640.10:FF:000002">
    <property type="entry name" value="Heat shock 70 kDa"/>
    <property type="match status" value="1"/>
</dbReference>
<dbReference type="FunFam" id="3.30.420.40:FF:000172">
    <property type="entry name" value="Heat shock 70 kDa protein"/>
    <property type="match status" value="1"/>
</dbReference>
<dbReference type="FunFam" id="3.30.30.30:FF:000001">
    <property type="entry name" value="heat shock 70 kDa protein-like"/>
    <property type="match status" value="1"/>
</dbReference>
<dbReference type="FunFam" id="3.30.420.40:FF:000026">
    <property type="entry name" value="Heat shock protein 70"/>
    <property type="match status" value="1"/>
</dbReference>
<dbReference type="Gene3D" id="1.20.1270.10">
    <property type="match status" value="1"/>
</dbReference>
<dbReference type="Gene3D" id="3.30.30.30">
    <property type="match status" value="1"/>
</dbReference>
<dbReference type="Gene3D" id="3.30.420.40">
    <property type="match status" value="2"/>
</dbReference>
<dbReference type="Gene3D" id="3.90.640.10">
    <property type="entry name" value="Actin, Chain A, domain 4"/>
    <property type="match status" value="1"/>
</dbReference>
<dbReference type="Gene3D" id="2.60.34.10">
    <property type="entry name" value="Substrate Binding Domain Of DNAk, Chain A, domain 1"/>
    <property type="match status" value="1"/>
</dbReference>
<dbReference type="InterPro" id="IPR043129">
    <property type="entry name" value="ATPase_NBD"/>
</dbReference>
<dbReference type="InterPro" id="IPR042050">
    <property type="entry name" value="BIP_NBD"/>
</dbReference>
<dbReference type="InterPro" id="IPR018181">
    <property type="entry name" value="Heat_shock_70_CS"/>
</dbReference>
<dbReference type="InterPro" id="IPR029048">
    <property type="entry name" value="HSP70_C_sf"/>
</dbReference>
<dbReference type="InterPro" id="IPR029047">
    <property type="entry name" value="HSP70_peptide-bd_sf"/>
</dbReference>
<dbReference type="InterPro" id="IPR013126">
    <property type="entry name" value="Hsp_70_fam"/>
</dbReference>
<dbReference type="NCBIfam" id="NF001413">
    <property type="entry name" value="PRK00290.1"/>
    <property type="match status" value="1"/>
</dbReference>
<dbReference type="PANTHER" id="PTHR19375">
    <property type="entry name" value="HEAT SHOCK PROTEIN 70KDA"/>
    <property type="match status" value="1"/>
</dbReference>
<dbReference type="Pfam" id="PF00012">
    <property type="entry name" value="HSP70"/>
    <property type="match status" value="1"/>
</dbReference>
<dbReference type="PRINTS" id="PR00301">
    <property type="entry name" value="HEATSHOCK70"/>
</dbReference>
<dbReference type="SUPFAM" id="SSF53067">
    <property type="entry name" value="Actin-like ATPase domain"/>
    <property type="match status" value="2"/>
</dbReference>
<dbReference type="SUPFAM" id="SSF100934">
    <property type="entry name" value="Heat shock protein 70kD (HSP70), C-terminal subdomain"/>
    <property type="match status" value="1"/>
</dbReference>
<dbReference type="SUPFAM" id="SSF100920">
    <property type="entry name" value="Heat shock protein 70kD (HSP70), peptide-binding domain"/>
    <property type="match status" value="1"/>
</dbReference>
<dbReference type="PROSITE" id="PS00014">
    <property type="entry name" value="ER_TARGET"/>
    <property type="match status" value="1"/>
</dbReference>
<dbReference type="PROSITE" id="PS00297">
    <property type="entry name" value="HSP70_1"/>
    <property type="match status" value="1"/>
</dbReference>
<dbReference type="PROSITE" id="PS00329">
    <property type="entry name" value="HSP70_2"/>
    <property type="match status" value="1"/>
</dbReference>
<dbReference type="PROSITE" id="PS01036">
    <property type="entry name" value="HSP70_3"/>
    <property type="match status" value="1"/>
</dbReference>
<name>BIP_YEAST</name>
<evidence type="ECO:0000250" key="1">
    <source>
        <dbReference type="UniProtKB" id="P11021"/>
    </source>
</evidence>
<evidence type="ECO:0000255" key="2"/>
<evidence type="ECO:0000255" key="3">
    <source>
        <dbReference type="PROSITE-ProRule" id="PRU10138"/>
    </source>
</evidence>
<evidence type="ECO:0000256" key="4">
    <source>
        <dbReference type="SAM" id="MobiDB-lite"/>
    </source>
</evidence>
<evidence type="ECO:0000269" key="5">
    <source>
    </source>
</evidence>
<evidence type="ECO:0000269" key="6">
    <source>
    </source>
</evidence>
<evidence type="ECO:0000269" key="7">
    <source>
    </source>
</evidence>
<evidence type="ECO:0000269" key="8">
    <source>
    </source>
</evidence>
<evidence type="ECO:0000303" key="9">
    <source>
    </source>
</evidence>
<evidence type="ECO:0000305" key="10"/>
<evidence type="ECO:0007829" key="11">
    <source>
        <dbReference type="PDB" id="3H0X"/>
    </source>
</evidence>
<evidence type="ECO:0007829" key="12">
    <source>
        <dbReference type="PDB" id="3QFU"/>
    </source>
</evidence>
<evidence type="ECO:0007829" key="13">
    <source>
        <dbReference type="PDB" id="3QML"/>
    </source>
</evidence>